<dbReference type="EMBL" id="AK154592">
    <property type="protein sequence ID" value="BAE32697.1"/>
    <property type="status" value="ALT_INIT"/>
    <property type="molecule type" value="mRNA"/>
</dbReference>
<dbReference type="EMBL" id="BC054747">
    <property type="protein sequence ID" value="AAH54747.1"/>
    <property type="molecule type" value="mRNA"/>
</dbReference>
<dbReference type="EMBL" id="BC057041">
    <property type="protein sequence ID" value="AAH57041.1"/>
    <property type="status" value="ALT_INIT"/>
    <property type="molecule type" value="mRNA"/>
</dbReference>
<dbReference type="CCDS" id="CCDS52178.1">
    <molecule id="Q3U3T8-1"/>
</dbReference>
<dbReference type="SMR" id="Q3U3T8"/>
<dbReference type="FunCoup" id="Q3U3T8">
    <property type="interactions" value="179"/>
</dbReference>
<dbReference type="IntAct" id="Q3U3T8">
    <property type="interactions" value="4"/>
</dbReference>
<dbReference type="MINT" id="Q3U3T8"/>
<dbReference type="STRING" id="10090.ENSMUSP00000103825"/>
<dbReference type="GlyGen" id="Q3U3T8">
    <property type="glycosylation" value="7 sites, 1 O-linked glycan (3 sites)"/>
</dbReference>
<dbReference type="iPTMnet" id="Q3U3T8"/>
<dbReference type="PhosphoSitePlus" id="Q3U3T8"/>
<dbReference type="jPOST" id="Q3U3T8"/>
<dbReference type="PaxDb" id="10090-ENSMUSP00000103825"/>
<dbReference type="ProteomicsDB" id="299746">
    <molecule id="Q3U3T8-1"/>
</dbReference>
<dbReference type="ProteomicsDB" id="299747">
    <molecule id="Q3U3T8-2"/>
</dbReference>
<dbReference type="ProteomicsDB" id="299748">
    <molecule id="Q3U3T8-3"/>
</dbReference>
<dbReference type="Pumba" id="Q3U3T8"/>
<dbReference type="AGR" id="MGI:1923696"/>
<dbReference type="MGI" id="MGI:1923696">
    <property type="gene designation" value="Wdr62"/>
</dbReference>
<dbReference type="eggNOG" id="KOG1408">
    <property type="taxonomic scope" value="Eukaryota"/>
</dbReference>
<dbReference type="InParanoid" id="Q3U3T8"/>
<dbReference type="PhylomeDB" id="Q3U3T8"/>
<dbReference type="ChiTaRS" id="Wdr62">
    <property type="organism name" value="mouse"/>
</dbReference>
<dbReference type="PRO" id="PR:Q3U3T8"/>
<dbReference type="Proteomes" id="UP000000589">
    <property type="component" value="Unplaced"/>
</dbReference>
<dbReference type="RNAct" id="Q3U3T8">
    <property type="molecule type" value="protein"/>
</dbReference>
<dbReference type="GO" id="GO:0005814">
    <property type="term" value="C:centriole"/>
    <property type="evidence" value="ECO:0007669"/>
    <property type="project" value="UniProtKB-SubCell"/>
</dbReference>
<dbReference type="GO" id="GO:0005813">
    <property type="term" value="C:centrosome"/>
    <property type="evidence" value="ECO:0007669"/>
    <property type="project" value="UniProtKB-SubCell"/>
</dbReference>
<dbReference type="GO" id="GO:0005737">
    <property type="term" value="C:cytoplasm"/>
    <property type="evidence" value="ECO:0007669"/>
    <property type="project" value="UniProtKB-KW"/>
</dbReference>
<dbReference type="GO" id="GO:0005634">
    <property type="term" value="C:nucleus"/>
    <property type="evidence" value="ECO:0000250"/>
    <property type="project" value="UniProtKB"/>
</dbReference>
<dbReference type="GO" id="GO:0000922">
    <property type="term" value="C:spindle pole"/>
    <property type="evidence" value="ECO:0007669"/>
    <property type="project" value="UniProtKB-SubCell"/>
</dbReference>
<dbReference type="GO" id="GO:0021987">
    <property type="term" value="P:cerebral cortex development"/>
    <property type="evidence" value="ECO:0000250"/>
    <property type="project" value="UniProtKB"/>
</dbReference>
<dbReference type="GO" id="GO:0007052">
    <property type="term" value="P:mitotic spindle organization"/>
    <property type="evidence" value="ECO:0000266"/>
    <property type="project" value="MGI"/>
</dbReference>
<dbReference type="GO" id="GO:0097150">
    <property type="term" value="P:neuronal stem cell population maintenance"/>
    <property type="evidence" value="ECO:0000266"/>
    <property type="project" value="MGI"/>
</dbReference>
<dbReference type="FunFam" id="2.130.10.10:FF:000091">
    <property type="entry name" value="mitogen-activated protein kinase-binding protein 1 isoform X1"/>
    <property type="match status" value="1"/>
</dbReference>
<dbReference type="FunFam" id="2.130.10.10:FF:001567">
    <property type="entry name" value="WD repeat domain 62"/>
    <property type="match status" value="1"/>
</dbReference>
<dbReference type="FunFam" id="2.130.10.10:FF:000046">
    <property type="entry name" value="WD repeat-containing protein 62 isoform 1"/>
    <property type="match status" value="1"/>
</dbReference>
<dbReference type="Gene3D" id="2.130.10.10">
    <property type="entry name" value="YVTN repeat-like/Quinoprotein amine dehydrogenase"/>
    <property type="match status" value="4"/>
</dbReference>
<dbReference type="InterPro" id="IPR011047">
    <property type="entry name" value="Quinoprotein_ADH-like_sf"/>
</dbReference>
<dbReference type="InterPro" id="IPR015943">
    <property type="entry name" value="WD40/YVTN_repeat-like_dom_sf"/>
</dbReference>
<dbReference type="InterPro" id="IPR056161">
    <property type="entry name" value="WD40_MABP1-WDR62_1st"/>
</dbReference>
<dbReference type="InterPro" id="IPR056162">
    <property type="entry name" value="WD40_MABP1-WDR62_2nd"/>
</dbReference>
<dbReference type="InterPro" id="IPR001680">
    <property type="entry name" value="WD40_rpt"/>
</dbReference>
<dbReference type="InterPro" id="IPR052779">
    <property type="entry name" value="WDR62"/>
</dbReference>
<dbReference type="InterPro" id="IPR056364">
    <property type="entry name" value="WDR62-MABP1_CC"/>
</dbReference>
<dbReference type="PANTHER" id="PTHR45589">
    <property type="entry name" value="WD REPEAT DOMAIN 62, ISOFORM G"/>
    <property type="match status" value="1"/>
</dbReference>
<dbReference type="PANTHER" id="PTHR45589:SF3">
    <property type="entry name" value="WD REPEAT-CONTAINING PROTEIN 62"/>
    <property type="match status" value="1"/>
</dbReference>
<dbReference type="Pfam" id="PF24780">
    <property type="entry name" value="WD40_MABP1-WDR62_1st"/>
    <property type="match status" value="1"/>
</dbReference>
<dbReference type="Pfam" id="PF24782">
    <property type="entry name" value="WD40_MABP1-WDR62_2nd"/>
    <property type="match status" value="1"/>
</dbReference>
<dbReference type="Pfam" id="PF24795">
    <property type="entry name" value="WDR62-MABP1_CC"/>
    <property type="match status" value="1"/>
</dbReference>
<dbReference type="SMART" id="SM00320">
    <property type="entry name" value="WD40"/>
    <property type="match status" value="12"/>
</dbReference>
<dbReference type="SUPFAM" id="SSF117289">
    <property type="entry name" value="Nucleoporin domain"/>
    <property type="match status" value="1"/>
</dbReference>
<dbReference type="SUPFAM" id="SSF50998">
    <property type="entry name" value="Quinoprotein alcohol dehydrogenase-like"/>
    <property type="match status" value="1"/>
</dbReference>
<dbReference type="PROSITE" id="PS50082">
    <property type="entry name" value="WD_REPEATS_2"/>
    <property type="match status" value="1"/>
</dbReference>
<dbReference type="PROSITE" id="PS50294">
    <property type="entry name" value="WD_REPEATS_REGION"/>
    <property type="match status" value="3"/>
</dbReference>
<sequence>MAALAAGGYTRSDTIEKLSSVMAGVPARRNQSSPPPAPPLCLRRRTRLAAAPEDTVQNRVTLEKVLGITAQNSSGLTCDPGTGHVAYLAGCVVVVLNPKENKQQHIFNTTRKSLSALAFSPDGKYIVTGENGHRPTVRIWDVEEKTQVAEMLGHKYGVACVAFSPNMKHIVSMGYQHDMVLNVWDWKKDIVVASNKVSCRVIALSFSEDSSYFVTVGNRHVRFWFLEASTEAKVTSTVPLVGRSGILGELHNNIFCGVACGRGRMAGNTFCVSYSGLLCQFNEKRVLDKWINLKVSLSSCLCVSDELIFCGCTDGIVRIFQAHSLLYLTNLPKPHYLGVDVAHGLDSSFLFHRKAEAVYPDTVALTFDPVHQWLSCVYKDHSIYIWDVKDIDEVSKIWSELFHSSFVWNVEVYPEFEDQRACLPSGTFLTCSSDNTIRFWNLDSASDTRWQKNIFSDSLLKVVYVENDIQHLQDLSHFPDRGSENGTPMDMKAGVRVMQVSPDGQHLASGDRSGNLRIHELHFMDELIKVEAHDAEVLCLEYSKPETGVTLLASASRDRLIHVLNVEKNYNLEQTLDDHSSSITAIKFAGTRDVQMISCGADKSIYFRSAQQASDGLHFVRTHHVAEKTTLYDMDIDITQKYVAVACQDRNVRVYNTVSGKQKKCYKGSQGDEGSLLKVHVDPSGTFLATSCSDKSISLIDFYSGECVAKMFGHSEIVTGMKFTYDCRHLITVSGDSCVFIWHLGPEITTCMKQHLLEINHQEQQQQPKDQKWSGPPSQETYASTPSEIRSLSPGEQTEDEMEEECEPEELLKTPSKDSLDPDPRCLLTNGKLPLWAKRLLGDDDVADSSAFHAKRSYQPHGRWAERAEQEPLKTILDAWSLDSYFTPMKPENLQDSVLDSVEPQNLAGLLSECSLGNGHTSPGEGLVSYLLHPELGSPKEDNRGHPSYLPLQREATEASELILCSPEAEVSLTGMHREYYEEETEAGPEDQQGDTYLRVSSVSSKDQSPPEDSGESEAELECSFAAAHSSAPQTDPGPHLTMTAGKPEYPSTEELSQPELPGLGNGSLPQTPEQEKFLRHHFETLTDAPTEELFHGSLGDIKISETEDYFFNPRLSISTQFLSRLQKTSRCPPRLPLHLMKSPEAQPVGQGGNQPKAGPLRAGTGYMSSDGTNVLSGQKAEETQEALSLLDRKPPTPTSVLTTGREQSISAPSSCSYLESTTSSHAKTTRSISLGDSEGPVTAELPQSLHKPLSPGQELQAIPTTVALTSSIKDHEPAPLSWGNHEARASLKLTLSSVCEQLLSPPPQEPPITHVWSQEPVDVPPSMAVTVASFCAPSPVDMSTLGLHSSMFLPKTSASGPLTPPAHLQLLETRSRVPGSTAALLEPTPDASGVIADSPGHWDTEVPTPELLGSVESVLHRLQTAFQEALDLYRMLVSSSQLGPEQQQAQTELASTFHWILNQLEASNCMAAANLAPPQTLPSPDPLSLPTLCPLASPNLQALLEHYSELLVQAVRRKARGD</sequence>
<protein>
    <recommendedName>
        <fullName>WD repeat-containing protein 62</fullName>
    </recommendedName>
</protein>
<gene>
    <name type="primary">Wdr62</name>
</gene>
<keyword id="KW-0007">Acetylation</keyword>
<keyword id="KW-0025">Alternative splicing</keyword>
<keyword id="KW-0963">Cytoplasm</keyword>
<keyword id="KW-0206">Cytoskeleton</keyword>
<keyword id="KW-0539">Nucleus</keyword>
<keyword id="KW-0597">Phosphoprotein</keyword>
<keyword id="KW-1185">Reference proteome</keyword>
<keyword id="KW-0677">Repeat</keyword>
<keyword id="KW-0853">WD repeat</keyword>
<comment type="function">
    <text evidence="1">Required for cerebral cortical development. Plays a role in neuronal proliferation and migration (By similarity). Plays a role in mother-centriole-dependent centriole duplication; the function seems also to involve CEP152, CDK5RAP2 and CEP63 through a stepwise assembled complex at the centrosome that recruits CDK2 required for centriole duplication (By similarity).</text>
</comment>
<comment type="subunit">
    <text evidence="1">Can form homodimers (via C-terminus). Interacts (via C-terminus) with MAPKBP1 (via C-terminus). Interacts with CDK5RAP2, CEP152, CEP63 and KIAA0753. CEP63, CDK5RAP2, CEP152, WDR62 are proposed to form a stepwise assembled complex at the centrosome forming a ring near parental centrioles.</text>
</comment>
<comment type="subcellular location">
    <subcellularLocation>
        <location evidence="1">Nucleus</location>
    </subcellularLocation>
    <subcellularLocation>
        <location evidence="1">Cytoplasm</location>
        <location evidence="1">Cytoskeleton</location>
        <location evidence="1">Spindle pole</location>
    </subcellularLocation>
    <subcellularLocation>
        <location evidence="1">Cytoplasm</location>
        <location evidence="1">Cytoskeleton</location>
        <location evidence="1">Microtubule organizing center</location>
        <location evidence="1">Centrosome</location>
    </subcellularLocation>
    <subcellularLocation>
        <location evidence="1">Cytoplasm</location>
        <location evidence="1">Cytoskeleton</location>
        <location evidence="1">Microtubule organizing center</location>
        <location evidence="1">Centrosome</location>
        <location evidence="1">Centriole</location>
    </subcellularLocation>
    <text evidence="1">Shows cell cycle-dependent localization. Accumulates to the spindle pole during mitosis (By similarity). Colocalizes with CDK5RAP2, CEP152 and WDR62 in a discrete ring around the proximal end of the parental centriole. At this site, a cohesive structure is predicted to engage parental centrioles and procentrioles (By similarity).</text>
</comment>
<comment type="alternative products">
    <event type="alternative splicing"/>
    <isoform>
        <id>Q3U3T8-1</id>
        <name>1</name>
        <sequence type="displayed"/>
    </isoform>
    <isoform>
        <id>Q3U3T8-2</id>
        <name>2</name>
        <sequence type="described" ref="VSP_024082 VSP_024084"/>
    </isoform>
    <isoform>
        <id>Q3U3T8-3</id>
        <name>3</name>
        <sequence type="described" ref="VSP_024081 VSP_024083"/>
    </isoform>
</comment>
<comment type="tissue specificity">
    <text evidence="3">Prominent in neural crest lineages from 9.5 dpc to 11.5 dpc. Also expressed in the ventricular and subventricular zones during the period of cerebral cortical neurogenesis (11.5-16.5 dpc), with expression decreasing in intensity by 17.5 dpc. In the cerebellum, it is strongly expressed in precursors of granule neurons at late embryonic and early postnatal stages; by postnatal day 9 (P9). Present in fetal brain, enriched within the ventricular and subventricular zone (at protein level).</text>
</comment>
<comment type="sequence caution" evidence="5">
    <conflict type="erroneous initiation">
        <sequence resource="EMBL-CDS" id="AAH57041"/>
    </conflict>
</comment>
<comment type="sequence caution" evidence="5">
    <conflict type="erroneous initiation">
        <sequence resource="EMBL-CDS" id="BAE32697"/>
    </conflict>
</comment>
<feature type="initiator methionine" description="Removed" evidence="1">
    <location>
        <position position="1"/>
    </location>
</feature>
<feature type="chain" id="PRO_0000281880" description="WD repeat-containing protein 62">
    <location>
        <begin position="2"/>
        <end position="1523"/>
    </location>
</feature>
<feature type="repeat" description="WD 1">
    <location>
        <begin position="109"/>
        <end position="150"/>
    </location>
</feature>
<feature type="repeat" description="WD 2">
    <location>
        <begin position="153"/>
        <end position="194"/>
    </location>
</feature>
<feature type="repeat" description="WD 3">
    <location>
        <begin position="196"/>
        <end position="234"/>
    </location>
</feature>
<feature type="repeat" description="WD 4">
    <location>
        <begin position="291"/>
        <end position="330"/>
    </location>
</feature>
<feature type="repeat" description="WD 5">
    <location>
        <begin position="357"/>
        <end position="396"/>
    </location>
</feature>
<feature type="repeat" description="WD 6">
    <location>
        <begin position="411"/>
        <end position="450"/>
    </location>
</feature>
<feature type="repeat" description="WD 7">
    <location>
        <begin position="490"/>
        <end position="529"/>
    </location>
</feature>
<feature type="repeat" description="WD 8">
    <location>
        <begin position="532"/>
        <end position="574"/>
    </location>
</feature>
<feature type="repeat" description="WD 9">
    <location>
        <begin position="578"/>
        <end position="618"/>
    </location>
</feature>
<feature type="repeat" description="WD 10">
    <location>
        <begin position="626"/>
        <end position="665"/>
    </location>
</feature>
<feature type="repeat" description="WD 11">
    <location>
        <begin position="671"/>
        <end position="713"/>
    </location>
</feature>
<feature type="repeat" description="WD 12">
    <location>
        <begin position="714"/>
        <end position="752"/>
    </location>
</feature>
<feature type="repeat" description="WD 13">
    <location>
        <begin position="803"/>
        <end position="846"/>
    </location>
</feature>
<feature type="region of interest" description="Disordered" evidence="2">
    <location>
        <begin position="762"/>
        <end position="824"/>
    </location>
</feature>
<feature type="region of interest" description="Disordered" evidence="2">
    <location>
        <begin position="1000"/>
        <end position="1072"/>
    </location>
</feature>
<feature type="region of interest" description="Disordered" evidence="2">
    <location>
        <begin position="1143"/>
        <end position="1258"/>
    </location>
</feature>
<feature type="compositionally biased region" description="Polar residues" evidence="2">
    <location>
        <begin position="776"/>
        <end position="790"/>
    </location>
</feature>
<feature type="compositionally biased region" description="Acidic residues" evidence="2">
    <location>
        <begin position="797"/>
        <end position="809"/>
    </location>
</feature>
<feature type="compositionally biased region" description="Basic and acidic residues" evidence="2">
    <location>
        <begin position="810"/>
        <end position="824"/>
    </location>
</feature>
<feature type="compositionally biased region" description="Polar residues" evidence="2">
    <location>
        <begin position="1167"/>
        <end position="1177"/>
    </location>
</feature>
<feature type="compositionally biased region" description="Polar residues" evidence="2">
    <location>
        <begin position="1199"/>
        <end position="1213"/>
    </location>
</feature>
<feature type="compositionally biased region" description="Low complexity" evidence="2">
    <location>
        <begin position="1214"/>
        <end position="1225"/>
    </location>
</feature>
<feature type="compositionally biased region" description="Polar residues" evidence="2">
    <location>
        <begin position="1226"/>
        <end position="1235"/>
    </location>
</feature>
<feature type="modified residue" description="N-acetylalanine" evidence="1">
    <location>
        <position position="2"/>
    </location>
</feature>
<feature type="modified residue" description="Phosphoserine" evidence="6">
    <location>
        <position position="33"/>
    </location>
</feature>
<feature type="modified residue" description="Phosphothreonine" evidence="1">
    <location>
        <position position="46"/>
    </location>
</feature>
<feature type="modified residue" description="Phosphoserine" evidence="1">
    <location>
        <position position="501"/>
    </location>
</feature>
<feature type="modified residue" description="Phosphoserine" evidence="6">
    <location>
        <position position="966"/>
    </location>
</feature>
<feature type="modified residue" description="Phosphoserine" evidence="6">
    <location>
        <position position="972"/>
    </location>
</feature>
<feature type="modified residue" description="Phosphothreonine" evidence="1">
    <location>
        <position position="1072"/>
    </location>
</feature>
<feature type="modified residue" description="Phosphoserine" evidence="1">
    <location>
        <position position="1117"/>
    </location>
</feature>
<feature type="modified residue" description="Phosphoserine" evidence="6">
    <location>
        <position position="1143"/>
    </location>
</feature>
<feature type="modified residue" description="Phosphoserine" evidence="1">
    <location>
        <position position="1169"/>
    </location>
</feature>
<feature type="modified residue" description="Phosphoserine" evidence="1">
    <location>
        <position position="1234"/>
    </location>
</feature>
<feature type="splice variant" id="VSP_024081" description="In isoform 3." evidence="4">
    <location>
        <begin position="913"/>
        <end position="934"/>
    </location>
</feature>
<feature type="splice variant" id="VSP_024082" description="In isoform 2." evidence="4">
    <original>GKPEYPSTEELSQPELPGLGNGSLPQTPEQ</original>
    <variation>ASSAVTQSADKSSPPCLPSRVPKYRRAFPA</variation>
    <location>
        <begin position="1046"/>
        <end position="1075"/>
    </location>
</feature>
<feature type="splice variant" id="VSP_024083" description="In isoform 3." evidence="4">
    <location>
        <begin position="1046"/>
        <end position="1048"/>
    </location>
</feature>
<feature type="splice variant" id="VSP_024084" description="In isoform 2." evidence="4">
    <location>
        <begin position="1076"/>
        <end position="1523"/>
    </location>
</feature>
<feature type="sequence conflict" description="In Ref. 2; AAH54747." evidence="5" ref="2">
    <original>T</original>
    <variation>A</variation>
    <location>
        <position position="136"/>
    </location>
</feature>
<feature type="sequence conflict" description="In Ref. 2; AAH57041." evidence="5" ref="2">
    <original>C</original>
    <variation>F</variation>
    <location>
        <position position="647"/>
    </location>
</feature>
<reference key="1">
    <citation type="journal article" date="2005" name="Science">
        <title>The transcriptional landscape of the mammalian genome.</title>
        <authorList>
            <person name="Carninci P."/>
            <person name="Kasukawa T."/>
            <person name="Katayama S."/>
            <person name="Gough J."/>
            <person name="Frith M.C."/>
            <person name="Maeda N."/>
            <person name="Oyama R."/>
            <person name="Ravasi T."/>
            <person name="Lenhard B."/>
            <person name="Wells C."/>
            <person name="Kodzius R."/>
            <person name="Shimokawa K."/>
            <person name="Bajic V.B."/>
            <person name="Brenner S.E."/>
            <person name="Batalov S."/>
            <person name="Forrest A.R."/>
            <person name="Zavolan M."/>
            <person name="Davis M.J."/>
            <person name="Wilming L.G."/>
            <person name="Aidinis V."/>
            <person name="Allen J.E."/>
            <person name="Ambesi-Impiombato A."/>
            <person name="Apweiler R."/>
            <person name="Aturaliya R.N."/>
            <person name="Bailey T.L."/>
            <person name="Bansal M."/>
            <person name="Baxter L."/>
            <person name="Beisel K.W."/>
            <person name="Bersano T."/>
            <person name="Bono H."/>
            <person name="Chalk A.M."/>
            <person name="Chiu K.P."/>
            <person name="Choudhary V."/>
            <person name="Christoffels A."/>
            <person name="Clutterbuck D.R."/>
            <person name="Crowe M.L."/>
            <person name="Dalla E."/>
            <person name="Dalrymple B.P."/>
            <person name="de Bono B."/>
            <person name="Della Gatta G."/>
            <person name="di Bernardo D."/>
            <person name="Down T."/>
            <person name="Engstrom P."/>
            <person name="Fagiolini M."/>
            <person name="Faulkner G."/>
            <person name="Fletcher C.F."/>
            <person name="Fukushima T."/>
            <person name="Furuno M."/>
            <person name="Futaki S."/>
            <person name="Gariboldi M."/>
            <person name="Georgii-Hemming P."/>
            <person name="Gingeras T.R."/>
            <person name="Gojobori T."/>
            <person name="Green R.E."/>
            <person name="Gustincich S."/>
            <person name="Harbers M."/>
            <person name="Hayashi Y."/>
            <person name="Hensch T.K."/>
            <person name="Hirokawa N."/>
            <person name="Hill D."/>
            <person name="Huminiecki L."/>
            <person name="Iacono M."/>
            <person name="Ikeo K."/>
            <person name="Iwama A."/>
            <person name="Ishikawa T."/>
            <person name="Jakt M."/>
            <person name="Kanapin A."/>
            <person name="Katoh M."/>
            <person name="Kawasawa Y."/>
            <person name="Kelso J."/>
            <person name="Kitamura H."/>
            <person name="Kitano H."/>
            <person name="Kollias G."/>
            <person name="Krishnan S.P."/>
            <person name="Kruger A."/>
            <person name="Kummerfeld S.K."/>
            <person name="Kurochkin I.V."/>
            <person name="Lareau L.F."/>
            <person name="Lazarevic D."/>
            <person name="Lipovich L."/>
            <person name="Liu J."/>
            <person name="Liuni S."/>
            <person name="McWilliam S."/>
            <person name="Madan Babu M."/>
            <person name="Madera M."/>
            <person name="Marchionni L."/>
            <person name="Matsuda H."/>
            <person name="Matsuzawa S."/>
            <person name="Miki H."/>
            <person name="Mignone F."/>
            <person name="Miyake S."/>
            <person name="Morris K."/>
            <person name="Mottagui-Tabar S."/>
            <person name="Mulder N."/>
            <person name="Nakano N."/>
            <person name="Nakauchi H."/>
            <person name="Ng P."/>
            <person name="Nilsson R."/>
            <person name="Nishiguchi S."/>
            <person name="Nishikawa S."/>
            <person name="Nori F."/>
            <person name="Ohara O."/>
            <person name="Okazaki Y."/>
            <person name="Orlando V."/>
            <person name="Pang K.C."/>
            <person name="Pavan W.J."/>
            <person name="Pavesi G."/>
            <person name="Pesole G."/>
            <person name="Petrovsky N."/>
            <person name="Piazza S."/>
            <person name="Reed J."/>
            <person name="Reid J.F."/>
            <person name="Ring B.Z."/>
            <person name="Ringwald M."/>
            <person name="Rost B."/>
            <person name="Ruan Y."/>
            <person name="Salzberg S.L."/>
            <person name="Sandelin A."/>
            <person name="Schneider C."/>
            <person name="Schoenbach C."/>
            <person name="Sekiguchi K."/>
            <person name="Semple C.A."/>
            <person name="Seno S."/>
            <person name="Sessa L."/>
            <person name="Sheng Y."/>
            <person name="Shibata Y."/>
            <person name="Shimada H."/>
            <person name="Shimada K."/>
            <person name="Silva D."/>
            <person name="Sinclair B."/>
            <person name="Sperling S."/>
            <person name="Stupka E."/>
            <person name="Sugiura K."/>
            <person name="Sultana R."/>
            <person name="Takenaka Y."/>
            <person name="Taki K."/>
            <person name="Tammoja K."/>
            <person name="Tan S.L."/>
            <person name="Tang S."/>
            <person name="Taylor M.S."/>
            <person name="Tegner J."/>
            <person name="Teichmann S.A."/>
            <person name="Ueda H.R."/>
            <person name="van Nimwegen E."/>
            <person name="Verardo R."/>
            <person name="Wei C.L."/>
            <person name="Yagi K."/>
            <person name="Yamanishi H."/>
            <person name="Zabarovsky E."/>
            <person name="Zhu S."/>
            <person name="Zimmer A."/>
            <person name="Hide W."/>
            <person name="Bult C."/>
            <person name="Grimmond S.M."/>
            <person name="Teasdale R.D."/>
            <person name="Liu E.T."/>
            <person name="Brusic V."/>
            <person name="Quackenbush J."/>
            <person name="Wahlestedt C."/>
            <person name="Mattick J.S."/>
            <person name="Hume D.A."/>
            <person name="Kai C."/>
            <person name="Sasaki D."/>
            <person name="Tomaru Y."/>
            <person name="Fukuda S."/>
            <person name="Kanamori-Katayama M."/>
            <person name="Suzuki M."/>
            <person name="Aoki J."/>
            <person name="Arakawa T."/>
            <person name="Iida J."/>
            <person name="Imamura K."/>
            <person name="Itoh M."/>
            <person name="Kato T."/>
            <person name="Kawaji H."/>
            <person name="Kawagashira N."/>
            <person name="Kawashima T."/>
            <person name="Kojima M."/>
            <person name="Kondo S."/>
            <person name="Konno H."/>
            <person name="Nakano K."/>
            <person name="Ninomiya N."/>
            <person name="Nishio T."/>
            <person name="Okada M."/>
            <person name="Plessy C."/>
            <person name="Shibata K."/>
            <person name="Shiraki T."/>
            <person name="Suzuki S."/>
            <person name="Tagami M."/>
            <person name="Waki K."/>
            <person name="Watahiki A."/>
            <person name="Okamura-Oho Y."/>
            <person name="Suzuki H."/>
            <person name="Kawai J."/>
            <person name="Hayashizaki Y."/>
        </authorList>
    </citation>
    <scope>NUCLEOTIDE SEQUENCE [LARGE SCALE MRNA] (ISOFORM 1)</scope>
    <source>
        <strain>NOD</strain>
    </source>
</reference>
<reference key="2">
    <citation type="journal article" date="2004" name="Genome Res.">
        <title>The status, quality, and expansion of the NIH full-length cDNA project: the Mammalian Gene Collection (MGC).</title>
        <authorList>
            <consortium name="The MGC Project Team"/>
        </authorList>
    </citation>
    <scope>NUCLEOTIDE SEQUENCE [LARGE SCALE MRNA] (ISOFORM 2)</scope>
    <scope>NUCLEOTIDE SEQUENCE [LARGE SCALE MRNA] OF 446-1523 (ISOFORM 3)</scope>
    <source>
        <strain>C57BL/6J</strain>
        <tissue>Brain</tissue>
    </source>
</reference>
<reference key="3">
    <citation type="journal article" date="2010" name="Cell">
        <title>A tissue-specific atlas of mouse protein phosphorylation and expression.</title>
        <authorList>
            <person name="Huttlin E.L."/>
            <person name="Jedrychowski M.P."/>
            <person name="Elias J.E."/>
            <person name="Goswami T."/>
            <person name="Rad R."/>
            <person name="Beausoleil S.A."/>
            <person name="Villen J."/>
            <person name="Haas W."/>
            <person name="Sowa M.E."/>
            <person name="Gygi S.P."/>
        </authorList>
    </citation>
    <scope>PHOSPHORYLATION [LARGE SCALE ANALYSIS] AT SER-33; SER-966; SER-972 AND SER-1143</scope>
    <scope>IDENTIFICATION BY MASS SPECTROMETRY [LARGE SCALE ANALYSIS]</scope>
    <source>
        <tissue>Lung</tissue>
        <tissue>Spleen</tissue>
        <tissue>Testis</tissue>
    </source>
</reference>
<reference key="4">
    <citation type="journal article" date="2010" name="Nature">
        <title>Whole-exome sequencing identifies recessive WDR62 mutations in severe brain malformations.</title>
        <authorList>
            <person name="Bilguvar K."/>
            <person name="Ozturk A.K."/>
            <person name="Louvi A."/>
            <person name="Kwan K.Y."/>
            <person name="Choi M."/>
            <person name="Tatli B."/>
            <person name="Yalnizoglu D."/>
            <person name="Tuysuz B."/>
            <person name="Caglayan A.O."/>
            <person name="Gokben S."/>
            <person name="Kaymakcalan H."/>
            <person name="Barak T."/>
            <person name="Bakircioglu M."/>
            <person name="Yasuno K."/>
            <person name="Ho W."/>
            <person name="Sanders S."/>
            <person name="Zhu Y."/>
            <person name="Yilmaz S."/>
            <person name="Dincer A."/>
            <person name="Johnson M.H."/>
            <person name="Bronen R.A."/>
            <person name="Kocer N."/>
            <person name="Per H."/>
            <person name="Mane S."/>
            <person name="Pamir M.N."/>
            <person name="Yalcinkaya C."/>
            <person name="Kumandas S."/>
            <person name="Topcu M."/>
            <person name="Ozmen M."/>
            <person name="Sestan N."/>
            <person name="Lifton R.P."/>
            <person name="State M.W."/>
            <person name="Gunel M."/>
        </authorList>
    </citation>
    <scope>TISSUE SPECIFICITY</scope>
</reference>
<accession>Q3U3T8</accession>
<accession>Q6PGG0</accession>
<accession>Q7TQE9</accession>
<organism>
    <name type="scientific">Mus musculus</name>
    <name type="common">Mouse</name>
    <dbReference type="NCBI Taxonomy" id="10090"/>
    <lineage>
        <taxon>Eukaryota</taxon>
        <taxon>Metazoa</taxon>
        <taxon>Chordata</taxon>
        <taxon>Craniata</taxon>
        <taxon>Vertebrata</taxon>
        <taxon>Euteleostomi</taxon>
        <taxon>Mammalia</taxon>
        <taxon>Eutheria</taxon>
        <taxon>Euarchontoglires</taxon>
        <taxon>Glires</taxon>
        <taxon>Rodentia</taxon>
        <taxon>Myomorpha</taxon>
        <taxon>Muroidea</taxon>
        <taxon>Muridae</taxon>
        <taxon>Murinae</taxon>
        <taxon>Mus</taxon>
        <taxon>Mus</taxon>
    </lineage>
</organism>
<proteinExistence type="evidence at protein level"/>
<evidence type="ECO:0000250" key="1">
    <source>
        <dbReference type="UniProtKB" id="O43379"/>
    </source>
</evidence>
<evidence type="ECO:0000256" key="2">
    <source>
        <dbReference type="SAM" id="MobiDB-lite"/>
    </source>
</evidence>
<evidence type="ECO:0000269" key="3">
    <source>
    </source>
</evidence>
<evidence type="ECO:0000303" key="4">
    <source>
    </source>
</evidence>
<evidence type="ECO:0000305" key="5"/>
<evidence type="ECO:0007744" key="6">
    <source>
    </source>
</evidence>
<name>WDR62_MOUSE</name>